<proteinExistence type="inferred from homology"/>
<protein>
    <recommendedName>
        <fullName evidence="1">Error-prone DNA polymerase</fullName>
        <ecNumber evidence="1">2.7.7.7</ecNumber>
    </recommendedName>
</protein>
<comment type="function">
    <text evidence="1">DNA polymerase involved in damage-induced mutagenesis and translesion synthesis (TLS). It is not the major replicative DNA polymerase.</text>
</comment>
<comment type="catalytic activity">
    <reaction evidence="1">
        <text>DNA(n) + a 2'-deoxyribonucleoside 5'-triphosphate = DNA(n+1) + diphosphate</text>
        <dbReference type="Rhea" id="RHEA:22508"/>
        <dbReference type="Rhea" id="RHEA-COMP:17339"/>
        <dbReference type="Rhea" id="RHEA-COMP:17340"/>
        <dbReference type="ChEBI" id="CHEBI:33019"/>
        <dbReference type="ChEBI" id="CHEBI:61560"/>
        <dbReference type="ChEBI" id="CHEBI:173112"/>
        <dbReference type="EC" id="2.7.7.7"/>
    </reaction>
</comment>
<comment type="subcellular location">
    <subcellularLocation>
        <location evidence="1">Cytoplasm</location>
    </subcellularLocation>
</comment>
<comment type="similarity">
    <text evidence="1">Belongs to the DNA polymerase type-C family. DnaE2 subfamily.</text>
</comment>
<organism>
    <name type="scientific">Rhodopseudomonas palustris (strain BisA53)</name>
    <dbReference type="NCBI Taxonomy" id="316055"/>
    <lineage>
        <taxon>Bacteria</taxon>
        <taxon>Pseudomonadati</taxon>
        <taxon>Pseudomonadota</taxon>
        <taxon>Alphaproteobacteria</taxon>
        <taxon>Hyphomicrobiales</taxon>
        <taxon>Nitrobacteraceae</taxon>
        <taxon>Rhodopseudomonas</taxon>
    </lineage>
</organism>
<reference key="1">
    <citation type="submission" date="2006-09" db="EMBL/GenBank/DDBJ databases">
        <title>Complete sequence of Rhodopseudomonas palustris BisA53.</title>
        <authorList>
            <consortium name="US DOE Joint Genome Institute"/>
            <person name="Copeland A."/>
            <person name="Lucas S."/>
            <person name="Lapidus A."/>
            <person name="Barry K."/>
            <person name="Detter J.C."/>
            <person name="Glavina del Rio T."/>
            <person name="Hammon N."/>
            <person name="Israni S."/>
            <person name="Dalin E."/>
            <person name="Tice H."/>
            <person name="Pitluck S."/>
            <person name="Chain P."/>
            <person name="Malfatti S."/>
            <person name="Shin M."/>
            <person name="Vergez L."/>
            <person name="Schmutz J."/>
            <person name="Larimer F."/>
            <person name="Land M."/>
            <person name="Hauser L."/>
            <person name="Pelletier D.A."/>
            <person name="Kyrpides N."/>
            <person name="Kim E."/>
            <person name="Harwood C.S."/>
            <person name="Oda Y."/>
            <person name="Richardson P."/>
        </authorList>
    </citation>
    <scope>NUCLEOTIDE SEQUENCE [LARGE SCALE GENOMIC DNA]</scope>
    <source>
        <strain>BisA53</strain>
    </source>
</reference>
<feature type="chain" id="PRO_1000070596" description="Error-prone DNA polymerase">
    <location>
        <begin position="1"/>
        <end position="1153"/>
    </location>
</feature>
<feature type="region of interest" description="Disordered" evidence="2">
    <location>
        <begin position="1107"/>
        <end position="1153"/>
    </location>
</feature>
<feature type="compositionally biased region" description="Basic and acidic residues" evidence="2">
    <location>
        <begin position="1116"/>
        <end position="1131"/>
    </location>
</feature>
<dbReference type="EC" id="2.7.7.7" evidence="1"/>
<dbReference type="EMBL" id="CP000463">
    <property type="protein sequence ID" value="ABJ05775.1"/>
    <property type="molecule type" value="Genomic_DNA"/>
</dbReference>
<dbReference type="SMR" id="Q07QK9"/>
<dbReference type="STRING" id="316055.RPE_1827"/>
<dbReference type="KEGG" id="rpe:RPE_1827"/>
<dbReference type="eggNOG" id="COG0587">
    <property type="taxonomic scope" value="Bacteria"/>
</dbReference>
<dbReference type="HOGENOM" id="CLU_001600_4_0_5"/>
<dbReference type="OrthoDB" id="9803237at2"/>
<dbReference type="GO" id="GO:0005737">
    <property type="term" value="C:cytoplasm"/>
    <property type="evidence" value="ECO:0007669"/>
    <property type="project" value="UniProtKB-SubCell"/>
</dbReference>
<dbReference type="GO" id="GO:0008408">
    <property type="term" value="F:3'-5' exonuclease activity"/>
    <property type="evidence" value="ECO:0007669"/>
    <property type="project" value="InterPro"/>
</dbReference>
<dbReference type="GO" id="GO:0003887">
    <property type="term" value="F:DNA-directed DNA polymerase activity"/>
    <property type="evidence" value="ECO:0007669"/>
    <property type="project" value="UniProtKB-UniRule"/>
</dbReference>
<dbReference type="GO" id="GO:0003676">
    <property type="term" value="F:nucleic acid binding"/>
    <property type="evidence" value="ECO:0007669"/>
    <property type="project" value="InterPro"/>
</dbReference>
<dbReference type="GO" id="GO:0006281">
    <property type="term" value="P:DNA repair"/>
    <property type="evidence" value="ECO:0007669"/>
    <property type="project" value="UniProtKB-UniRule"/>
</dbReference>
<dbReference type="GO" id="GO:0006260">
    <property type="term" value="P:DNA replication"/>
    <property type="evidence" value="ECO:0007669"/>
    <property type="project" value="UniProtKB-KW"/>
</dbReference>
<dbReference type="CDD" id="cd04485">
    <property type="entry name" value="DnaE_OBF"/>
    <property type="match status" value="1"/>
</dbReference>
<dbReference type="CDD" id="cd07434">
    <property type="entry name" value="PHP_PolIIIA_DnaE2"/>
    <property type="match status" value="1"/>
</dbReference>
<dbReference type="Gene3D" id="3.20.20.140">
    <property type="entry name" value="Metal-dependent hydrolases"/>
    <property type="match status" value="1"/>
</dbReference>
<dbReference type="HAMAP" id="MF_01902">
    <property type="entry name" value="DNApol_error_prone"/>
    <property type="match status" value="1"/>
</dbReference>
<dbReference type="InterPro" id="IPR011708">
    <property type="entry name" value="DNA_pol3_alpha_NTPase_dom"/>
</dbReference>
<dbReference type="InterPro" id="IPR040982">
    <property type="entry name" value="DNA_pol3_finger"/>
</dbReference>
<dbReference type="InterPro" id="IPR023073">
    <property type="entry name" value="DnaE2"/>
</dbReference>
<dbReference type="InterPro" id="IPR004805">
    <property type="entry name" value="DnaE2/DnaE/PolC"/>
</dbReference>
<dbReference type="InterPro" id="IPR029460">
    <property type="entry name" value="DNAPol_HHH"/>
</dbReference>
<dbReference type="InterPro" id="IPR004365">
    <property type="entry name" value="NA-bd_OB_tRNA"/>
</dbReference>
<dbReference type="InterPro" id="IPR004013">
    <property type="entry name" value="PHP_dom"/>
</dbReference>
<dbReference type="InterPro" id="IPR003141">
    <property type="entry name" value="Pol/His_phosphatase_N"/>
</dbReference>
<dbReference type="NCBIfam" id="TIGR00594">
    <property type="entry name" value="polc"/>
    <property type="match status" value="1"/>
</dbReference>
<dbReference type="NCBIfam" id="NF004225">
    <property type="entry name" value="PRK05672.1"/>
    <property type="match status" value="1"/>
</dbReference>
<dbReference type="PANTHER" id="PTHR32294">
    <property type="entry name" value="DNA POLYMERASE III SUBUNIT ALPHA"/>
    <property type="match status" value="1"/>
</dbReference>
<dbReference type="PANTHER" id="PTHR32294:SF4">
    <property type="entry name" value="ERROR-PRONE DNA POLYMERASE"/>
    <property type="match status" value="1"/>
</dbReference>
<dbReference type="Pfam" id="PF07733">
    <property type="entry name" value="DNA_pol3_alpha"/>
    <property type="match status" value="1"/>
</dbReference>
<dbReference type="Pfam" id="PF17657">
    <property type="entry name" value="DNA_pol3_finger"/>
    <property type="match status" value="1"/>
</dbReference>
<dbReference type="Pfam" id="PF14579">
    <property type="entry name" value="HHH_6"/>
    <property type="match status" value="1"/>
</dbReference>
<dbReference type="Pfam" id="PF02811">
    <property type="entry name" value="PHP"/>
    <property type="match status" value="1"/>
</dbReference>
<dbReference type="Pfam" id="PF01336">
    <property type="entry name" value="tRNA_anti-codon"/>
    <property type="match status" value="1"/>
</dbReference>
<dbReference type="SMART" id="SM00481">
    <property type="entry name" value="POLIIIAc"/>
    <property type="match status" value="1"/>
</dbReference>
<gene>
    <name evidence="1" type="primary">dnaE2</name>
    <name type="ordered locus">RPE_1827</name>
</gene>
<name>DNAE2_RHOP5</name>
<evidence type="ECO:0000255" key="1">
    <source>
        <dbReference type="HAMAP-Rule" id="MF_01902"/>
    </source>
</evidence>
<evidence type="ECO:0000256" key="2">
    <source>
        <dbReference type="SAM" id="MobiDB-lite"/>
    </source>
</evidence>
<accession>Q07QK9</accession>
<sequence>MTAPRYAEIGVTSNFSFLEGGSHPQEFVQQASALGLAAIGIADRNTLAGVVRAYSELDNEELFYKPKLLIGARLCFADGTPDILAYPTDRAAYGRLCRLLSAGKLRAGKGECHLSFADLEAFTKTSTPSWPGLSRPSTSSSKAVQVSVDARVKPGHDEAKRAAGESRLLLVLMPPYRFQSHEITAALTRLTALQGAGVWLALVPYYRGDDKRRLARLQRIAAAARVPGIASNDVLYHHESRRALQDVLTCVRDKTTIDKAGRLLESNAERYLKPTEEMARLFRADPDAIAETLRFADRISFTLDELKYQYPDEPVPPGKTAQQHLKDLTEQGIAEYFPNGIDAKLRATIDKELTIIAHRQYAPYFLTVHDIVRYARSQNILCQGRGSAANSAVCYVLGITCVDPTEIDLLFERFVSEERDEPPDIDVDFEHSRREEVMQYIYRRYGRHRAAIVSTVIHYRPRSAIRDVGKALGLSEDVTAALADTVWGSWGKGLNEMQVRQAGLDPTNPMIVRAIDLATELIGFPRHLSQHVGGYVLTQDRLDEFVPIGNAAMEERTFIEWDKDDIDAVKMMKVDVLALGMLTCIRKGFDLIAQHKGKRYELADIKSEDDNEVYKMLQRGESVGVFQVESRAQMNMLPRLRPRCFYDLVIEVAIVRPGPIQGDMVHPYLRRRNGQEPVVYPSPAGHAGEANELKTILGKTLGVPLFQEQAMRIAIEAAHFTPDEANQLRRAMATFRNVGTIGKFEAKMTGNLVARGYDPVFAQNCFEQIKGFGSYGFPESHAASFAKLVYVSAWLKHAHPDAFCCALLNSQPMGFYAPAQIVGDARQNGVEIRGVDVAYSFSQNTLEERCGQHHAVRLGFRQIDGFRWADFDEANLWQARGDAPPEDWGARIVEAREKSPFTSLEQFARATALPKRALILLADADAFRSLKLDRRAALWAVRRLPDDVPLPLFEVAKAREQQDENAAPLPLMPLAEHVVADYQTVRLSLKGHPMQFLRALFAAEGVNTCRAVSETRRNGRRARCAGVVLVRQRPGSAKGVVFITLEDETGIANLVVWPAVMEKFRKEVMGARLLWVEGKIQASPEGVVHLVAEELVDRSAEMARLSDELIAPSASTEREAPLNDDRRDHPDLPAQQIRHPRNVRILPPSRDFH</sequence>
<keyword id="KW-0963">Cytoplasm</keyword>
<keyword id="KW-0227">DNA damage</keyword>
<keyword id="KW-0234">DNA repair</keyword>
<keyword id="KW-0235">DNA replication</keyword>
<keyword id="KW-0239">DNA-directed DNA polymerase</keyword>
<keyword id="KW-0548">Nucleotidyltransferase</keyword>
<keyword id="KW-0808">Transferase</keyword>